<evidence type="ECO:0000250" key="1"/>
<evidence type="ECO:0000255" key="2"/>
<evidence type="ECO:0000305" key="3"/>
<evidence type="ECO:0007829" key="4">
    <source>
        <dbReference type="PDB" id="8AMZ"/>
    </source>
</evidence>
<keyword id="KW-0002">3D-structure</keyword>
<keyword id="KW-0067">ATP-binding</keyword>
<keyword id="KW-0963">Cytoplasm</keyword>
<keyword id="KW-0547">Nucleotide-binding</keyword>
<keyword id="KW-0539">Nucleus</keyword>
<keyword id="KW-0647">Proteasome</keyword>
<keyword id="KW-1185">Reference proteome</keyword>
<reference key="1">
    <citation type="journal article" date="1997" name="Plant Mol. Biol.">
        <title>Characterization of 26S proteasome alpha- and beta-type and ATPase subunits from spinach and their expression during early stages of seedling development.</title>
        <authorList>
            <person name="Ito N."/>
            <person name="Tomizawa K."/>
            <person name="Tanaka K."/>
            <person name="Matsui M."/>
            <person name="Kendrick R.E."/>
            <person name="Sato T."/>
            <person name="Nakagawa H."/>
        </authorList>
    </citation>
    <scope>NUCLEOTIDE SEQUENCE [MRNA]</scope>
</reference>
<comment type="function">
    <text evidence="1">The 26S proteasome is involved in the ATP-dependent degradation of ubiquitinated proteins. The regulatory (or ATPase) complex confers ATP dependency and substrate specificity to the 26S complex (By similarity).</text>
</comment>
<comment type="subcellular location">
    <subcellularLocation>
        <location evidence="3">Cytoplasm</location>
    </subcellularLocation>
    <subcellularLocation>
        <location evidence="3">Nucleus</location>
    </subcellularLocation>
</comment>
<comment type="similarity">
    <text evidence="3">Belongs to the AAA ATPase family.</text>
</comment>
<accession>Q41365</accession>
<name>PRS7_SPIOL</name>
<organism>
    <name type="scientific">Spinacia oleracea</name>
    <name type="common">Spinach</name>
    <dbReference type="NCBI Taxonomy" id="3562"/>
    <lineage>
        <taxon>Eukaryota</taxon>
        <taxon>Viridiplantae</taxon>
        <taxon>Streptophyta</taxon>
        <taxon>Embryophyta</taxon>
        <taxon>Tracheophyta</taxon>
        <taxon>Spermatophyta</taxon>
        <taxon>Magnoliopsida</taxon>
        <taxon>eudicotyledons</taxon>
        <taxon>Gunneridae</taxon>
        <taxon>Pentapetalae</taxon>
        <taxon>Caryophyllales</taxon>
        <taxon>Chenopodiaceae</taxon>
        <taxon>Chenopodioideae</taxon>
        <taxon>Anserineae</taxon>
        <taxon>Spinacia</taxon>
    </lineage>
</organism>
<dbReference type="EMBL" id="D86121">
    <property type="protein sequence ID" value="BAA13021.1"/>
    <property type="molecule type" value="mRNA"/>
</dbReference>
<dbReference type="PIR" id="T09104">
    <property type="entry name" value="T09104"/>
</dbReference>
<dbReference type="PDB" id="8AMZ">
    <property type="method" value="EM"/>
    <property type="resolution" value="3.30 A"/>
    <property type="chains" value="H=1-426"/>
</dbReference>
<dbReference type="PDBsum" id="8AMZ"/>
<dbReference type="SMR" id="Q41365"/>
<dbReference type="OrthoDB" id="1937997at2759"/>
<dbReference type="Proteomes" id="UP001155700">
    <property type="component" value="Unplaced"/>
</dbReference>
<dbReference type="GO" id="GO:0005737">
    <property type="term" value="C:cytoplasm"/>
    <property type="evidence" value="ECO:0007669"/>
    <property type="project" value="UniProtKB-SubCell"/>
</dbReference>
<dbReference type="GO" id="GO:0005634">
    <property type="term" value="C:nucleus"/>
    <property type="evidence" value="ECO:0007669"/>
    <property type="project" value="UniProtKB-SubCell"/>
</dbReference>
<dbReference type="GO" id="GO:0008540">
    <property type="term" value="C:proteasome regulatory particle, base subcomplex"/>
    <property type="evidence" value="ECO:0000318"/>
    <property type="project" value="GO_Central"/>
</dbReference>
<dbReference type="GO" id="GO:0005524">
    <property type="term" value="F:ATP binding"/>
    <property type="evidence" value="ECO:0007669"/>
    <property type="project" value="UniProtKB-KW"/>
</dbReference>
<dbReference type="GO" id="GO:0016887">
    <property type="term" value="F:ATP hydrolysis activity"/>
    <property type="evidence" value="ECO:0007669"/>
    <property type="project" value="InterPro"/>
</dbReference>
<dbReference type="GO" id="GO:0036402">
    <property type="term" value="F:proteasome-activating activity"/>
    <property type="evidence" value="ECO:0000318"/>
    <property type="project" value="GO_Central"/>
</dbReference>
<dbReference type="GO" id="GO:0043161">
    <property type="term" value="P:proteasome-mediated ubiquitin-dependent protein catabolic process"/>
    <property type="evidence" value="ECO:0000318"/>
    <property type="project" value="GO_Central"/>
</dbReference>
<dbReference type="CDD" id="cd19502">
    <property type="entry name" value="RecA-like_PAN_like"/>
    <property type="match status" value="1"/>
</dbReference>
<dbReference type="FunFam" id="1.10.8.60:FF:000005">
    <property type="entry name" value="26S protease regulatory subunit 7"/>
    <property type="match status" value="1"/>
</dbReference>
<dbReference type="FunFam" id="2.40.50.140:FF:000037">
    <property type="entry name" value="26S protease regulatory subunit 7"/>
    <property type="match status" value="1"/>
</dbReference>
<dbReference type="FunFam" id="3.40.50.300:FF:000027">
    <property type="entry name" value="26S protease regulatory subunit 7"/>
    <property type="match status" value="1"/>
</dbReference>
<dbReference type="Gene3D" id="1.10.8.60">
    <property type="match status" value="1"/>
</dbReference>
<dbReference type="Gene3D" id="2.40.50.140">
    <property type="entry name" value="Nucleic acid-binding proteins"/>
    <property type="match status" value="1"/>
</dbReference>
<dbReference type="Gene3D" id="3.40.50.300">
    <property type="entry name" value="P-loop containing nucleotide triphosphate hydrolases"/>
    <property type="match status" value="1"/>
</dbReference>
<dbReference type="InterPro" id="IPR050221">
    <property type="entry name" value="26S_Proteasome_ATPase"/>
</dbReference>
<dbReference type="InterPro" id="IPR003593">
    <property type="entry name" value="AAA+_ATPase"/>
</dbReference>
<dbReference type="InterPro" id="IPR041569">
    <property type="entry name" value="AAA_lid_3"/>
</dbReference>
<dbReference type="InterPro" id="IPR003959">
    <property type="entry name" value="ATPase_AAA_core"/>
</dbReference>
<dbReference type="InterPro" id="IPR003960">
    <property type="entry name" value="ATPase_AAA_CS"/>
</dbReference>
<dbReference type="InterPro" id="IPR012340">
    <property type="entry name" value="NA-bd_OB-fold"/>
</dbReference>
<dbReference type="InterPro" id="IPR027417">
    <property type="entry name" value="P-loop_NTPase"/>
</dbReference>
<dbReference type="InterPro" id="IPR048723">
    <property type="entry name" value="PRS7-like_OB"/>
</dbReference>
<dbReference type="PANTHER" id="PTHR23073">
    <property type="entry name" value="26S PROTEASOME REGULATORY SUBUNIT"/>
    <property type="match status" value="1"/>
</dbReference>
<dbReference type="Pfam" id="PF00004">
    <property type="entry name" value="AAA"/>
    <property type="match status" value="1"/>
</dbReference>
<dbReference type="Pfam" id="PF17862">
    <property type="entry name" value="AAA_lid_3"/>
    <property type="match status" value="1"/>
</dbReference>
<dbReference type="Pfam" id="PF21236">
    <property type="entry name" value="PRS7_OB"/>
    <property type="match status" value="1"/>
</dbReference>
<dbReference type="SMART" id="SM00382">
    <property type="entry name" value="AAA"/>
    <property type="match status" value="1"/>
</dbReference>
<dbReference type="SUPFAM" id="SSF52540">
    <property type="entry name" value="P-loop containing nucleoside triphosphate hydrolases"/>
    <property type="match status" value="1"/>
</dbReference>
<dbReference type="PROSITE" id="PS00674">
    <property type="entry name" value="AAA"/>
    <property type="match status" value="1"/>
</dbReference>
<feature type="chain" id="PRO_0000084717" description="26S proteasome regulatory subunit 7">
    <location>
        <begin position="1"/>
        <end position="426"/>
    </location>
</feature>
<feature type="binding site" evidence="2">
    <location>
        <begin position="209"/>
        <end position="216"/>
    </location>
    <ligand>
        <name>ATP</name>
        <dbReference type="ChEBI" id="CHEBI:30616"/>
    </ligand>
</feature>
<feature type="helix" evidence="4">
    <location>
        <begin position="35"/>
        <end position="53"/>
    </location>
</feature>
<feature type="turn" evidence="4">
    <location>
        <begin position="54"/>
        <end position="56"/>
    </location>
</feature>
<feature type="turn" evidence="4">
    <location>
        <begin position="68"/>
        <end position="70"/>
    </location>
</feature>
<feature type="turn" evidence="4">
    <location>
        <begin position="72"/>
        <end position="77"/>
    </location>
</feature>
<feature type="helix" evidence="4">
    <location>
        <begin position="79"/>
        <end position="82"/>
    </location>
</feature>
<feature type="strand" evidence="4">
    <location>
        <begin position="91"/>
        <end position="94"/>
    </location>
</feature>
<feature type="strand" evidence="4">
    <location>
        <begin position="105"/>
        <end position="107"/>
    </location>
</feature>
<feature type="strand" evidence="4">
    <location>
        <begin position="109"/>
        <end position="111"/>
    </location>
</feature>
<feature type="strand" evidence="4">
    <location>
        <begin position="113"/>
        <end position="115"/>
    </location>
</feature>
<feature type="strand" evidence="4">
    <location>
        <begin position="132"/>
        <end position="135"/>
    </location>
</feature>
<feature type="turn" evidence="4">
    <location>
        <begin position="137"/>
        <end position="139"/>
    </location>
</feature>
<feature type="strand" evidence="4">
    <location>
        <begin position="142"/>
        <end position="145"/>
    </location>
</feature>
<feature type="helix" evidence="4">
    <location>
        <begin position="152"/>
        <end position="155"/>
    </location>
</feature>
<feature type="helix" evidence="4">
    <location>
        <begin position="167"/>
        <end position="169"/>
    </location>
</feature>
<feature type="helix" evidence="4">
    <location>
        <begin position="174"/>
        <end position="184"/>
    </location>
</feature>
<feature type="helix" evidence="4">
    <location>
        <begin position="186"/>
        <end position="189"/>
    </location>
</feature>
<feature type="helix" evidence="4">
    <location>
        <begin position="193"/>
        <end position="197"/>
    </location>
</feature>
<feature type="strand" evidence="4">
    <location>
        <begin position="213"/>
        <end position="215"/>
    </location>
</feature>
<feature type="helix" evidence="4">
    <location>
        <begin position="216"/>
        <end position="225"/>
    </location>
</feature>
<feature type="strand" evidence="4">
    <location>
        <begin position="228"/>
        <end position="234"/>
    </location>
</feature>
<feature type="helix" evidence="4">
    <location>
        <begin position="235"/>
        <end position="238"/>
    </location>
</feature>
<feature type="turn" evidence="4">
    <location>
        <begin position="243"/>
        <end position="246"/>
    </location>
</feature>
<feature type="helix" evidence="4">
    <location>
        <begin position="247"/>
        <end position="259"/>
    </location>
</feature>
<feature type="strand" evidence="4">
    <location>
        <begin position="260"/>
        <end position="268"/>
    </location>
</feature>
<feature type="helix" evidence="4">
    <location>
        <begin position="270"/>
        <end position="273"/>
    </location>
</feature>
<feature type="helix" evidence="4">
    <location>
        <begin position="287"/>
        <end position="299"/>
    </location>
</feature>
<feature type="strand" evidence="4">
    <location>
        <begin position="300"/>
        <end position="303"/>
    </location>
</feature>
<feature type="strand" evidence="4">
    <location>
        <begin position="307"/>
        <end position="313"/>
    </location>
</feature>
<feature type="helix" evidence="4">
    <location>
        <begin position="317"/>
        <end position="319"/>
    </location>
</feature>
<feature type="helix" evidence="4">
    <location>
        <begin position="322"/>
        <end position="325"/>
    </location>
</feature>
<feature type="turn" evidence="4">
    <location>
        <begin position="327"/>
        <end position="329"/>
    </location>
</feature>
<feature type="helix" evidence="4">
    <location>
        <begin position="342"/>
        <end position="351"/>
    </location>
</feature>
<feature type="turn" evidence="4">
    <location>
        <begin position="352"/>
        <end position="354"/>
    </location>
</feature>
<feature type="helix" evidence="4">
    <location>
        <begin position="363"/>
        <end position="367"/>
    </location>
</feature>
<feature type="helix" evidence="4">
    <location>
        <begin position="375"/>
        <end position="391"/>
    </location>
</feature>
<feature type="strand" evidence="4">
    <location>
        <begin position="395"/>
        <end position="397"/>
    </location>
</feature>
<feature type="helix" evidence="4">
    <location>
        <begin position="399"/>
        <end position="409"/>
    </location>
</feature>
<feature type="turn" evidence="4">
    <location>
        <begin position="410"/>
        <end position="412"/>
    </location>
</feature>
<feature type="helix" evidence="4">
    <location>
        <begin position="413"/>
        <end position="415"/>
    </location>
</feature>
<feature type="turn" evidence="4">
    <location>
        <begin position="420"/>
        <end position="424"/>
    </location>
</feature>
<proteinExistence type="evidence at protein level"/>
<gene>
    <name type="primary">RPT1</name>
</gene>
<protein>
    <recommendedName>
        <fullName>26S proteasome regulatory subunit 7</fullName>
    </recommendedName>
    <alternativeName>
        <fullName>26S proteasome AAA-ATPase subunit RPT1</fullName>
    </alternativeName>
    <alternativeName>
        <fullName>26S proteasome subunit 7</fullName>
    </alternativeName>
    <alternativeName>
        <fullName>Regulatory particle triple-A ATPase subunit 1</fullName>
    </alternativeName>
</protein>
<sequence>MAIEHEDDLKDEKNPRPLDEDDIALLKTYGLGPYSASIKKVEKEIKDMSKKVNDLIGIKESDTGLAAPSQWDLVSDKQMMQEEQPLQVARCTKIINPNTEDAKYVINVKQIAKFVVGLGDKVSPTDIEEGMRVGVDRNKYQIQIPLPPKIDPSVTMMTVEEKPDVTYNDVGGCKEQIEKMREVVELPMLHPEKFVKLGIDPPKGVLCYGPPGTGKTLLARAVANRTDACFIRVIGSELVQKYVGEGARMVRELFQMARSKKACIVFFDEVDAIGGARFDDGVGGDNEVQRTMLEIVNQLDGFDARGNIKVLMATNRPDTLDPALLRPGRLDRKVEFGLPDLEGRTQIFKIHTRTMNCERDIRFELLARLCPNSTGADIRSVCTEAGMYAIRARRKTVTEKDFLDAVNKVIKGYQKFSATPKYMVYN</sequence>